<keyword id="KW-0002">3D-structure</keyword>
<keyword id="KW-0025">Alternative splicing</keyword>
<keyword id="KW-0963">Cytoplasm</keyword>
<keyword id="KW-0217">Developmental protein</keyword>
<keyword id="KW-0221">Differentiation</keyword>
<keyword id="KW-0378">Hydrolase</keyword>
<keyword id="KW-0488">Methylation</keyword>
<keyword id="KW-0896">Oogenesis</keyword>
<keyword id="KW-1185">Reference proteome</keyword>
<keyword id="KW-0694">RNA-binding</keyword>
<keyword id="KW-0943">RNA-mediated gene silencing</keyword>
<keyword id="KW-0744">Spermatogenesis</keyword>
<name>AGO3_DROME</name>
<sequence>MSGRGNLLSLFNKNAGNMGKSISSKDHEIDSGLDFNNSESSGERLLSSHNIETDLITTLQHVNISVGRGRARLIDTLKTDDHTSNQFITSESKENITKKTKGPESEAIASENGLFFPDLIYGSKGSSVNIYCNYLKLTTDESKGVFNYEVRFFPPIDSVHLRIKYLNDHKDKLGGTKTFDGNTLYLPILLPNKMTVFISKAEDVELQIRILYKKKEEMRNCTQLYNILFDRVMKVLNYVKFDRKQFDPSRPKIIPLAKLEVWPGYVTAVDEYKGGLMLCCDVSHRILCQKTVLEMLVDLYQQNVEHYQESARKMLVGNIVLTRYNNRTYKINDICFDQNPTCQFEIKTGCTSYVEYYKQYHNINIKDVNQPLIYSIKKSRGIPAERENLQFCLIPELCYLTGLRDEVRSDNKLMREIATFTRVSPNQRQMALNKFYENVSNTPAAQEILNSWGLSLTNNSNKISGRQMDIEQIYFSKISVSAGRSAEFSKHAVTNEMLKVVHLSKWIIIHLRNYRQAATSLLDNMKQACESLGMNISNPTMISLDHDRIDAYIQALRRNITMNTQMVVCICHNRRDDRYAAIKKICCSEIPIPSQVINAKTLQNDLKIRSVVQKIVLQMNCKLGGSLWTVKIPFKNVMICGIDSYHDPSNRGNSVAAFVASINSSYSQWYSKAVVQTKREEIVNGLSASFEIALKMYRKRNGKLPTNIIIYRDGIGDGQLYTCLNYEIPQFEMVCGNRIKISYIVVQKRINTRIFSGSGIHLENPLPGTVVDQHITKSNMYDFFLVSQLVRQGTVTPTHYVVLRDDCNYGPDIIQKLSYKLCFLYYNWAGTVRIPACCMYAHKLAYLIGQSIQRDVAEALSEKLFYL</sequence>
<dbReference type="EC" id="3.1.26.-" evidence="4"/>
<dbReference type="EMBL" id="EF211827">
    <property type="protein sequence ID" value="ABO27430.1"/>
    <property type="molecule type" value="mRNA"/>
</dbReference>
<dbReference type="EMBL" id="EF434174">
    <property type="protein sequence ID" value="ABO26294.1"/>
    <property type="molecule type" value="mRNA"/>
</dbReference>
<dbReference type="EMBL" id="AE014296">
    <property type="protein sequence ID" value="ABI31274.2"/>
    <property type="molecule type" value="Genomic_DNA"/>
</dbReference>
<dbReference type="EMBL" id="AE014296">
    <property type="protein sequence ID" value="ABI31275.2"/>
    <property type="molecule type" value="Genomic_DNA"/>
</dbReference>
<dbReference type="EMBL" id="AE014296">
    <property type="protein sequence ID" value="ACZ94769.1"/>
    <property type="molecule type" value="Genomic_DNA"/>
</dbReference>
<dbReference type="EMBL" id="AE014296">
    <property type="protein sequence ID" value="EAA45981.3"/>
    <property type="molecule type" value="Genomic_DNA"/>
</dbReference>
<dbReference type="EMBL" id="BT050541">
    <property type="protein sequence ID" value="ACJ13248.1"/>
    <property type="status" value="ALT_INIT"/>
    <property type="molecule type" value="mRNA"/>
</dbReference>
<dbReference type="EMBL" id="BT053722">
    <property type="protein sequence ID" value="ACK77640.1"/>
    <property type="status" value="ALT_SEQ"/>
    <property type="molecule type" value="mRNA"/>
</dbReference>
<dbReference type="EMBL" id="JX656887">
    <property type="protein sequence ID" value="AFX62827.1"/>
    <property type="molecule type" value="mRNA"/>
</dbReference>
<dbReference type="EMBL" id="JX656888">
    <property type="protein sequence ID" value="AFX62828.1"/>
    <property type="molecule type" value="mRNA"/>
</dbReference>
<dbReference type="EMBL" id="EF688531">
    <property type="protein sequence ID" value="ABU63676.1"/>
    <property type="molecule type" value="mRNA"/>
</dbReference>
<dbReference type="RefSeq" id="NP_001036627.2">
    <molecule id="Q7PLK0-1"/>
    <property type="nucleotide sequence ID" value="NM_001043162.3"/>
</dbReference>
<dbReference type="RefSeq" id="NP_001036628.2">
    <molecule id="Q7PLK0-1"/>
    <property type="nucleotide sequence ID" value="NM_001043163.3"/>
</dbReference>
<dbReference type="RefSeq" id="NP_001036629.2">
    <molecule id="Q7PLK0-1"/>
    <property type="nucleotide sequence ID" value="NM_001043164.3"/>
</dbReference>
<dbReference type="RefSeq" id="NP_001163498.1">
    <molecule id="Q7PLK0-2"/>
    <property type="nucleotide sequence ID" value="NM_001170027.2"/>
</dbReference>
<dbReference type="PDB" id="7CFC">
    <property type="method" value="X-ray"/>
    <property type="resolution" value="2.40 A"/>
    <property type="chains" value="F/G/H/I=63-78"/>
</dbReference>
<dbReference type="PDBsum" id="7CFC"/>
<dbReference type="SMR" id="Q7PLK0"/>
<dbReference type="BioGRID" id="78275">
    <property type="interactions" value="18"/>
</dbReference>
<dbReference type="FunCoup" id="Q7PLK0">
    <property type="interactions" value="66"/>
</dbReference>
<dbReference type="IntAct" id="Q7PLK0">
    <property type="interactions" value="7"/>
</dbReference>
<dbReference type="MINT" id="Q7PLK0"/>
<dbReference type="STRING" id="7227.FBpp0289159"/>
<dbReference type="PaxDb" id="7227-FBpp0289159"/>
<dbReference type="EnsemblMetazoa" id="FBtr0299880">
    <molecule id="Q7PLK0-1"/>
    <property type="protein sequence ID" value="FBpp0289158"/>
    <property type="gene ID" value="FBgn0250816"/>
</dbReference>
<dbReference type="EnsemblMetazoa" id="FBtr0299881">
    <molecule id="Q7PLK0-1"/>
    <property type="protein sequence ID" value="FBpp0289159"/>
    <property type="gene ID" value="FBgn0250816"/>
</dbReference>
<dbReference type="EnsemblMetazoa" id="FBtr0299882">
    <molecule id="Q7PLK0-1"/>
    <property type="protein sequence ID" value="FBpp0289160"/>
    <property type="gene ID" value="FBgn0250816"/>
</dbReference>
<dbReference type="EnsemblMetazoa" id="FBtr0301725">
    <molecule id="Q7PLK0-2"/>
    <property type="protein sequence ID" value="FBpp0290939"/>
    <property type="gene ID" value="FBgn0250816"/>
</dbReference>
<dbReference type="GeneID" id="3355150"/>
<dbReference type="KEGG" id="dme:Dmel_CG40300"/>
<dbReference type="AGR" id="FB:FBgn0250816"/>
<dbReference type="CTD" id="192669"/>
<dbReference type="FlyBase" id="FBgn0250816">
    <property type="gene designation" value="AGO3"/>
</dbReference>
<dbReference type="VEuPathDB" id="VectorBase:FBgn0250816"/>
<dbReference type="eggNOG" id="KOG1042">
    <property type="taxonomic scope" value="Eukaryota"/>
</dbReference>
<dbReference type="GeneTree" id="ENSGT00950000183200"/>
<dbReference type="HOGENOM" id="CLU_008813_0_0_1"/>
<dbReference type="InParanoid" id="Q7PLK0"/>
<dbReference type="OMA" id="EGGLKLC"/>
<dbReference type="OrthoDB" id="445936at2759"/>
<dbReference type="PhylomeDB" id="Q7PLK0"/>
<dbReference type="BioGRID-ORCS" id="3355150">
    <property type="hits" value="0 hits in 3 CRISPR screens"/>
</dbReference>
<dbReference type="GenomeRNAi" id="3355150"/>
<dbReference type="PRO" id="PR:Q7PLK0"/>
<dbReference type="Proteomes" id="UP000000803">
    <property type="component" value="Chromosome 3L"/>
</dbReference>
<dbReference type="Bgee" id="FBgn0250816">
    <property type="expression patterns" value="Expressed in spermatogonium in testis and 118 other cell types or tissues"/>
</dbReference>
<dbReference type="GO" id="GO:0005737">
    <property type="term" value="C:cytoplasm"/>
    <property type="evidence" value="ECO:0000314"/>
    <property type="project" value="FlyBase"/>
</dbReference>
<dbReference type="GO" id="GO:0005829">
    <property type="term" value="C:cytosol"/>
    <property type="evidence" value="ECO:0000314"/>
    <property type="project" value="FlyBase"/>
</dbReference>
<dbReference type="GO" id="GO:0031315">
    <property type="term" value="C:extrinsic component of mitochondrial outer membrane"/>
    <property type="evidence" value="ECO:0000314"/>
    <property type="project" value="FlyBase"/>
</dbReference>
<dbReference type="GO" id="GO:0005634">
    <property type="term" value="C:nucleus"/>
    <property type="evidence" value="ECO:0000318"/>
    <property type="project" value="GO_Central"/>
</dbReference>
<dbReference type="GO" id="GO:0043186">
    <property type="term" value="C:P granule"/>
    <property type="evidence" value="ECO:0000314"/>
    <property type="project" value="UniProtKB"/>
</dbReference>
<dbReference type="GO" id="GO:0048471">
    <property type="term" value="C:perinuclear region of cytoplasm"/>
    <property type="evidence" value="ECO:0007669"/>
    <property type="project" value="UniProtKB-SubCell"/>
</dbReference>
<dbReference type="GO" id="GO:0034584">
    <property type="term" value="F:piRNA binding"/>
    <property type="evidence" value="ECO:0000314"/>
    <property type="project" value="FlyBase"/>
</dbReference>
<dbReference type="GO" id="GO:0004521">
    <property type="term" value="F:RNA endonuclease activity"/>
    <property type="evidence" value="ECO:0000314"/>
    <property type="project" value="FlyBase"/>
</dbReference>
<dbReference type="GO" id="GO:0016891">
    <property type="term" value="F:RNA endonuclease activity, producing 5'-phosphomonoesters"/>
    <property type="evidence" value="ECO:0000314"/>
    <property type="project" value="FlyBase"/>
</dbReference>
<dbReference type="GO" id="GO:0048477">
    <property type="term" value="P:oogenesis"/>
    <property type="evidence" value="ECO:0007669"/>
    <property type="project" value="UniProtKB-KW"/>
</dbReference>
<dbReference type="GO" id="GO:0034587">
    <property type="term" value="P:piRNA processing"/>
    <property type="evidence" value="ECO:0000318"/>
    <property type="project" value="GO_Central"/>
</dbReference>
<dbReference type="GO" id="GO:0140991">
    <property type="term" value="P:piRNA-mediated gene silencing by mRNA destabilization"/>
    <property type="evidence" value="ECO:0000315"/>
    <property type="project" value="FlyBase"/>
</dbReference>
<dbReference type="GO" id="GO:0031047">
    <property type="term" value="P:regulatory ncRNA-mediated gene silencing"/>
    <property type="evidence" value="ECO:0000318"/>
    <property type="project" value="GO_Central"/>
</dbReference>
<dbReference type="GO" id="GO:0140965">
    <property type="term" value="P:secondary piRNA processing"/>
    <property type="evidence" value="ECO:0000314"/>
    <property type="project" value="FlyBase"/>
</dbReference>
<dbReference type="GO" id="GO:0007283">
    <property type="term" value="P:spermatogenesis"/>
    <property type="evidence" value="ECO:0000318"/>
    <property type="project" value="GO_Central"/>
</dbReference>
<dbReference type="GO" id="GO:0141009">
    <property type="term" value="P:transposable element silencing by piRNA-mediated mRNA destabilization"/>
    <property type="evidence" value="ECO:0000315"/>
    <property type="project" value="FlyBase"/>
</dbReference>
<dbReference type="CDD" id="cd02845">
    <property type="entry name" value="PAZ_piwi_like"/>
    <property type="match status" value="1"/>
</dbReference>
<dbReference type="CDD" id="cd04658">
    <property type="entry name" value="Piwi_piwi-like_Euk"/>
    <property type="match status" value="1"/>
</dbReference>
<dbReference type="FunFam" id="3.40.50.2300:FF:000141">
    <property type="entry name" value="piwi-like protein 2 isoform X1"/>
    <property type="match status" value="1"/>
</dbReference>
<dbReference type="FunFam" id="3.30.420.10:FF:000014">
    <property type="entry name" value="Piwi-like RNA-mediated gene silencing 1"/>
    <property type="match status" value="1"/>
</dbReference>
<dbReference type="FunFam" id="2.170.260.10:FF:000003">
    <property type="entry name" value="Piwi-like RNA-mediated gene silencing 2"/>
    <property type="match status" value="1"/>
</dbReference>
<dbReference type="Gene3D" id="3.40.50.2300">
    <property type="match status" value="1"/>
</dbReference>
<dbReference type="Gene3D" id="2.170.260.10">
    <property type="entry name" value="paz domain"/>
    <property type="match status" value="1"/>
</dbReference>
<dbReference type="Gene3D" id="3.30.420.10">
    <property type="entry name" value="Ribonuclease H-like superfamily/Ribonuclease H"/>
    <property type="match status" value="1"/>
</dbReference>
<dbReference type="InterPro" id="IPR003100">
    <property type="entry name" value="PAZ_dom"/>
</dbReference>
<dbReference type="InterPro" id="IPR036085">
    <property type="entry name" value="PAZ_dom_sf"/>
</dbReference>
<dbReference type="InterPro" id="IPR003165">
    <property type="entry name" value="Piwi"/>
</dbReference>
<dbReference type="InterPro" id="IPR012337">
    <property type="entry name" value="RNaseH-like_sf"/>
</dbReference>
<dbReference type="InterPro" id="IPR036397">
    <property type="entry name" value="RNaseH_sf"/>
</dbReference>
<dbReference type="PANTHER" id="PTHR22891">
    <property type="entry name" value="EUKARYOTIC TRANSLATION INITIATION FACTOR 2C"/>
    <property type="match status" value="1"/>
</dbReference>
<dbReference type="Pfam" id="PF02170">
    <property type="entry name" value="PAZ"/>
    <property type="match status" value="1"/>
</dbReference>
<dbReference type="Pfam" id="PF02171">
    <property type="entry name" value="Piwi"/>
    <property type="match status" value="1"/>
</dbReference>
<dbReference type="Pfam" id="PF23278">
    <property type="entry name" value="Piwi_N"/>
    <property type="match status" value="1"/>
</dbReference>
<dbReference type="SMART" id="SM00949">
    <property type="entry name" value="PAZ"/>
    <property type="match status" value="1"/>
</dbReference>
<dbReference type="SMART" id="SM00950">
    <property type="entry name" value="Piwi"/>
    <property type="match status" value="1"/>
</dbReference>
<dbReference type="SUPFAM" id="SSF101690">
    <property type="entry name" value="PAZ domain"/>
    <property type="match status" value="1"/>
</dbReference>
<dbReference type="SUPFAM" id="SSF53098">
    <property type="entry name" value="Ribonuclease H-like"/>
    <property type="match status" value="1"/>
</dbReference>
<dbReference type="PROSITE" id="PS50821">
    <property type="entry name" value="PAZ"/>
    <property type="match status" value="1"/>
</dbReference>
<dbReference type="PROSITE" id="PS50822">
    <property type="entry name" value="PIWI"/>
    <property type="match status" value="1"/>
</dbReference>
<comment type="function">
    <text evidence="4 5 7 9 10 12 13 14 15 16">Component of the perinuclear meiotic nuage, a germline-specific subcellular membraneless ribonucleoprotein compartment involved in production of transposable element-repressing Piwi-interacting RNA (piRNA)-induced silencing complexes (piRISCs), which are essential for maintaining germline integrity during oogenesis (PubMed:22303351, PubMed:26295961). Acts via the Piwi-interacting RNA (piRNA) metabolic process, which mediates the repression of transposable elements during meiosis by forming complexes composed of piRNAs and Piwi proteins and governs the methylation and subsequent repression of transposons (PubMed:17322028, PubMed:17346786, PubMed:19395009, PubMed:20980675). Piwi protein that directly binds piRNAs, a class of 24 to 30 nucleotide RNAs that are generated by a Dicer-independent mechanism and are primarily derived from transposons and other repeated sequence elements (PubMed:17322028, PubMed:17346786, PubMed:26212455, PubMed:26295961). Associates predominantly with sense piRNAs that contain adenine at nucleotide 10, but shows no preference for uridine at the 5' end (PubMed:17322028, PubMed:17346786, PubMed:26212455). Shows RNA cleavage or slicer activity (PubMed:17322028). Together with Piwi protein aub recruited to subregions of the perinuclear nuage by krimp, which coordinates their activity in the ping-pong amplification step of secondary piRNA biogenesis (PubMed:26295961, PubMed:34210982). Krimp recruits piRNA bound aub and unbound AGO3, bringing them into close proximity to facilitate the loading onto AGO3 of freshly cut piRNAs generated by aub cleavage of target sequences; krimp recognizes the piRNA loading state of the Piwi proteins via symmetrically dimethylated arginine modification in their N-terminus (PubMed:34210982). Important for asymmetric ping-pong amplification to bias production towards antisense piRNAs capable of silencing transposable elements (PubMed:19395009, PubMed:26212455). In testis, associates with Su(Ste) and AT-chX-1 piRNAs mostly produced from antisense precursors (PubMed:20980675). In the germline, acts to amplify pools of antisense piRNAs, among others Su(Ste), AT-chX-1 and roo, and to limit sense piRNA accumulation (PubMed:20980675). Forms a complex with smg, twin, aub and specific piRNAs that targets nos mRNA (and probably other maternal mRNAS) for deadenylation promoting its decay during early embryogenesis (PubMed:20953170). Involved in transposon silencing in the adult brain (PubMed:23559253).</text>
</comment>
<comment type="subunit">
    <text evidence="8 9 11 14 15 16">Component of the ping-pong piRNA processing (4P) complex consisting of krimp, aub and AGO3 (PubMed:19959991, PubMed:26295961, PubMed:34210982). Interacts (via N-terminus when not methylated on arginine residues) with krimp (via non-canonical tudor domain); this interaction leads to symmetrical dimethylation on AGO3 arginine residues and its subsequent dissociation from krimp (PubMed:26212455, PubMed:26295961, PubMed:34210982). Krimp associated AGO3 is mostly free of piRNA binding and the interaction plays an important role in the loading of AGO3 with piRNAs; piRNA binding may stimulate dissociation of the two proteins (PubMed:26212455, PubMed:26295961). May form part of a piRNA processing complex consisting of tud, aub and AGO3 (PubMed:19959991). Interacts (when symmetrically dimethylated on arginine residues) with tud (PubMed:19959991, PubMed:26212455). Forms a complex with smg, twin, aub, nos mRNA and piRNAs that target the nos 3'-untranslated region, in early embryos (PubMed:20953170). Interacts (via the N-terminal region when symmetrically methylated on arginine residues) with papi (via C-terminus); this interaction is RNA-independent and may be required for AGO3 localization to the nuage (PubMed:21447556). Interacts with TER94 and tral (PubMed:21447556).</text>
</comment>
<comment type="interaction">
    <interactant intactId="EBI-3431981">
        <id>Q7PLK0</id>
    </interactant>
    <interactant intactId="EBI-6915287">
        <id>Q9VQ91</id>
        <label>papi</label>
    </interactant>
    <organismsDiffer>false</organismsDiffer>
    <experiments>6</experiments>
</comment>
<comment type="interaction">
    <interactant intactId="EBI-3431981">
        <id>Q7PLK0</id>
    </interactant>
    <interactant intactId="EBI-498741">
        <id>P25823</id>
        <label>tud</label>
    </interactant>
    <organismsDiffer>false</organismsDiffer>
    <experiments>5</experiments>
</comment>
<comment type="subcellular location">
    <subcellularLocation>
        <location evidence="4 5 6 7 9 10 11">Cytoplasm</location>
    </subcellularLocation>
    <subcellularLocation>
        <location evidence="12 15">Cytoplasm</location>
        <location evidence="12 15">Perinuclear region</location>
    </subcellularLocation>
    <subcellularLocation>
        <location evidence="12 15">Cytoplasm</location>
        <location evidence="12 15">Cytoplasmic ribonucleoprotein granule</location>
    </subcellularLocation>
    <text evidence="4 5 6 7 9 10 11 12 15">Component of the perinuclear meiotic nuage (also known as germline granule or P granule), a germline-specific membraneless ribonucleoprotein biocondensate involved in post-transcriptional regulation of transposons and mRNAs (PubMed:22303351, PubMed:26295961). Adopts a granular distribution within the nuage (PubMed:26295961). Localization to the nuage is dependent on aub and krimp but not tud (PubMed:22303351, PubMed:26295961). piRNA binding increases mobility within the nuage (PubMed:26295961). Also found in prominent but discrete foci in the germarium. Unlike other nuage components, does not accumulate at the posterior pole in oocytes and early embryos. In the cytoplasm of syncytial embryos, accumulates in discrete foci.</text>
</comment>
<comment type="alternative products">
    <event type="alternative splicing"/>
    <isoform>
        <id>Q7PLK0-1</id>
        <name evidence="3 17">D</name>
        <name evidence="18">E</name>
        <name evidence="18">F</name>
        <sequence type="displayed"/>
    </isoform>
    <isoform>
        <id>Q7PLK0-2</id>
        <name evidence="3 4">G</name>
        <sequence type="described" ref="VSP_047355"/>
    </isoform>
</comment>
<comment type="tissue specificity">
    <text evidence="4 5 6 10 13">In ovary, expressed in germline stem cells, germline cyst cells, nurse cells and oocytes during early stages. Also found in the somatic cap cells of the germarium. In testis, expressed in germline stem cells, primary gonial cells and early spermatocytes. No expression detected in the somatic hub cells at the apical tip of the testis (at protein level). Expressed in neurons throughout the adult brain and in the mushroom body subdivision in the peduncle. In the mushroom body, expressed only in gamma and core alpha-beta neurons.</text>
</comment>
<comment type="developmental stage">
    <text evidence="4 12">Expressed maternally. Expression is high in early embryos but gradually decreases as development proceeds (at protein level). Expressed in germline cells at early stages of spermatogenesis and throughout oogenesis (at protein level) (PubMed:22303351).</text>
</comment>
<comment type="PTM">
    <text evidence="6 8 14 16">Symmetrically dimethylated on Arg-4, Arg-68 and Arg-70, most likely by csul/PRMT5/DART5 (PubMed:19377467, PubMed:19959991, PubMed:26212455). Methylation state probably functions as an indicator of its piRNA binding state (PubMed:34210982).</text>
</comment>
<comment type="disruption phenotype">
    <text evidence="7 10">Female sterility. Male semi-sterility accompanied by production of Ste protein crystals in primary spermatocytes. Mutant males fail to maintain germline stem cells.</text>
</comment>
<comment type="similarity">
    <text evidence="20">Belongs to the argonaute family. Piwi subfamily.</text>
</comment>
<comment type="caution">
    <text evidence="20">Has been given the gene name AGO3 by FlyBase based on the literature but is more similar to members of the Piwi subfamily.</text>
</comment>
<comment type="sequence caution" evidence="20">
    <conflict type="erroneous initiation">
        <sequence resource="EMBL-CDS" id="ACJ13248"/>
    </conflict>
    <text>Extended N-terminus.</text>
</comment>
<comment type="sequence caution" evidence="20">
    <conflict type="miscellaneous discrepancy">
        <sequence resource="EMBL-CDS" id="ACK77640"/>
    </conflict>
    <text>Contaminating sequence. Sequence of unknown origin in the C-terminal part.</text>
</comment>
<proteinExistence type="evidence at protein level"/>
<evidence type="ECO:0000255" key="1">
    <source>
        <dbReference type="PROSITE-ProRule" id="PRU00142"/>
    </source>
</evidence>
<evidence type="ECO:0000255" key="2">
    <source>
        <dbReference type="PROSITE-ProRule" id="PRU00150"/>
    </source>
</evidence>
<evidence type="ECO:0000269" key="3">
    <source>
    </source>
</evidence>
<evidence type="ECO:0000269" key="4">
    <source>
    </source>
</evidence>
<evidence type="ECO:0000269" key="5">
    <source>
    </source>
</evidence>
<evidence type="ECO:0000269" key="6">
    <source>
    </source>
</evidence>
<evidence type="ECO:0000269" key="7">
    <source>
    </source>
</evidence>
<evidence type="ECO:0000269" key="8">
    <source>
    </source>
</evidence>
<evidence type="ECO:0000269" key="9">
    <source>
    </source>
</evidence>
<evidence type="ECO:0000269" key="10">
    <source>
    </source>
</evidence>
<evidence type="ECO:0000269" key="11">
    <source>
    </source>
</evidence>
<evidence type="ECO:0000269" key="12">
    <source>
    </source>
</evidence>
<evidence type="ECO:0000269" key="13">
    <source>
    </source>
</evidence>
<evidence type="ECO:0000269" key="14">
    <source>
    </source>
</evidence>
<evidence type="ECO:0000269" key="15">
    <source>
    </source>
</evidence>
<evidence type="ECO:0000269" key="16">
    <source>
    </source>
</evidence>
<evidence type="ECO:0000269" key="17">
    <source ref="6"/>
</evidence>
<evidence type="ECO:0000303" key="18">
    <source>
    </source>
</evidence>
<evidence type="ECO:0000303" key="19">
    <source>
    </source>
</evidence>
<evidence type="ECO:0000305" key="20"/>
<evidence type="ECO:0000312" key="21">
    <source>
        <dbReference type="EMBL" id="ABO26294.1"/>
    </source>
</evidence>
<evidence type="ECO:0000312" key="22">
    <source>
        <dbReference type="EMBL" id="ABO27430.1"/>
    </source>
</evidence>
<evidence type="ECO:0000312" key="23">
    <source>
        <dbReference type="EMBL" id="ABU63676.1"/>
    </source>
</evidence>
<evidence type="ECO:0000312" key="24">
    <source>
        <dbReference type="EMBL" id="ACJ13248.1"/>
    </source>
</evidence>
<evidence type="ECO:0000312" key="25">
    <source>
        <dbReference type="EMBL" id="EAA45981.3"/>
    </source>
</evidence>
<evidence type="ECO:0000312" key="26">
    <source>
        <dbReference type="FlyBase" id="FBgn0250816"/>
    </source>
</evidence>
<evidence type="ECO:0000312" key="27">
    <source>
        <dbReference type="Proteomes" id="UP000000803"/>
    </source>
</evidence>
<evidence type="ECO:0007744" key="28">
    <source>
        <dbReference type="PDB" id="7CFC"/>
    </source>
</evidence>
<evidence type="ECO:0007829" key="29">
    <source>
        <dbReference type="PDB" id="7CFC"/>
    </source>
</evidence>
<gene>
    <name evidence="26" type="primary">AGO3</name>
    <name evidence="26" type="ORF">CG40300</name>
</gene>
<accession>Q7PLK0</accession>
<accession>A4GND8</accession>
<accession>A4GUJ7</accession>
<accession>A7YFW6</accession>
<accession>B6IDV1</accession>
<accession>B7FNN2</accession>
<accession>K7WKR9</accession>
<accession>K7XHY4</accession>
<protein>
    <recommendedName>
        <fullName evidence="26">Protein argonaute-3</fullName>
        <ecNumber evidence="4">3.1.26.-</ecNumber>
    </recommendedName>
</protein>
<reference evidence="20 22" key="1">
    <citation type="journal article" date="2007" name="Cell">
        <title>Discrete small RNA-generating loci as master regulators of transposon activity in Drosophila.</title>
        <authorList>
            <person name="Brennecke J."/>
            <person name="Aravin A.A."/>
            <person name="Stark A."/>
            <person name="Dus M."/>
            <person name="Kellis M."/>
            <person name="Sachidanandam R."/>
            <person name="Hannon G.J."/>
        </authorList>
    </citation>
    <scope>NUCLEOTIDE SEQUENCE [MRNA] (ISOFORM D)</scope>
    <scope>FUNCTION</scope>
    <scope>RNA-BINDING</scope>
    <scope>SUBCELLULAR LOCATION</scope>
    <scope>TISSUE SPECIFICITY</scope>
</reference>
<reference evidence="20 21" key="2">
    <citation type="journal article" date="2007" name="Science">
        <title>A slicer-mediated mechanism for repeat-associated siRNA 5' end formation in Drosophila.</title>
        <authorList>
            <person name="Gunawardane L.S."/>
            <person name="Saito K."/>
            <person name="Nishida K.M."/>
            <person name="Miyoshi K."/>
            <person name="Kawamura Y."/>
            <person name="Nagami T."/>
            <person name="Siomi H."/>
            <person name="Siomi M.C."/>
        </authorList>
    </citation>
    <scope>NUCLEOTIDE SEQUENCE [MRNA] (ISOFORM G)</scope>
    <scope>FUNCTION</scope>
    <scope>CATALYTIC ACTIVITY</scope>
    <scope>RNA-BINDING</scope>
    <scope>SUBCELLULAR LOCATION</scope>
    <scope>TISSUE SPECIFICITY</scope>
    <scope>DEVELOPMENTAL STAGE</scope>
</reference>
<reference evidence="25" key="3">
    <citation type="journal article" date="2000" name="Science">
        <title>The genome sequence of Drosophila melanogaster.</title>
        <authorList>
            <person name="Adams M.D."/>
            <person name="Celniker S.E."/>
            <person name="Holt R.A."/>
            <person name="Evans C.A."/>
            <person name="Gocayne J.D."/>
            <person name="Amanatides P.G."/>
            <person name="Scherer S.E."/>
            <person name="Li P.W."/>
            <person name="Hoskins R.A."/>
            <person name="Galle R.F."/>
            <person name="George R.A."/>
            <person name="Lewis S.E."/>
            <person name="Richards S."/>
            <person name="Ashburner M."/>
            <person name="Henderson S.N."/>
            <person name="Sutton G.G."/>
            <person name="Wortman J.R."/>
            <person name="Yandell M.D."/>
            <person name="Zhang Q."/>
            <person name="Chen L.X."/>
            <person name="Brandon R.C."/>
            <person name="Rogers Y.-H.C."/>
            <person name="Blazej R.G."/>
            <person name="Champe M."/>
            <person name="Pfeiffer B.D."/>
            <person name="Wan K.H."/>
            <person name="Doyle C."/>
            <person name="Baxter E.G."/>
            <person name="Helt G."/>
            <person name="Nelson C.R."/>
            <person name="Miklos G.L.G."/>
            <person name="Abril J.F."/>
            <person name="Agbayani A."/>
            <person name="An H.-J."/>
            <person name="Andrews-Pfannkoch C."/>
            <person name="Baldwin D."/>
            <person name="Ballew R.M."/>
            <person name="Basu A."/>
            <person name="Baxendale J."/>
            <person name="Bayraktaroglu L."/>
            <person name="Beasley E.M."/>
            <person name="Beeson K.Y."/>
            <person name="Benos P.V."/>
            <person name="Berman B.P."/>
            <person name="Bhandari D."/>
            <person name="Bolshakov S."/>
            <person name="Borkova D."/>
            <person name="Botchan M.R."/>
            <person name="Bouck J."/>
            <person name="Brokstein P."/>
            <person name="Brottier P."/>
            <person name="Burtis K.C."/>
            <person name="Busam D.A."/>
            <person name="Butler H."/>
            <person name="Cadieu E."/>
            <person name="Center A."/>
            <person name="Chandra I."/>
            <person name="Cherry J.M."/>
            <person name="Cawley S."/>
            <person name="Dahlke C."/>
            <person name="Davenport L.B."/>
            <person name="Davies P."/>
            <person name="de Pablos B."/>
            <person name="Delcher A."/>
            <person name="Deng Z."/>
            <person name="Mays A.D."/>
            <person name="Dew I."/>
            <person name="Dietz S.M."/>
            <person name="Dodson K."/>
            <person name="Doup L.E."/>
            <person name="Downes M."/>
            <person name="Dugan-Rocha S."/>
            <person name="Dunkov B.C."/>
            <person name="Dunn P."/>
            <person name="Durbin K.J."/>
            <person name="Evangelista C.C."/>
            <person name="Ferraz C."/>
            <person name="Ferriera S."/>
            <person name="Fleischmann W."/>
            <person name="Fosler C."/>
            <person name="Gabrielian A.E."/>
            <person name="Garg N.S."/>
            <person name="Gelbart W.M."/>
            <person name="Glasser K."/>
            <person name="Glodek A."/>
            <person name="Gong F."/>
            <person name="Gorrell J.H."/>
            <person name="Gu Z."/>
            <person name="Guan P."/>
            <person name="Harris M."/>
            <person name="Harris N.L."/>
            <person name="Harvey D.A."/>
            <person name="Heiman T.J."/>
            <person name="Hernandez J.R."/>
            <person name="Houck J."/>
            <person name="Hostin D."/>
            <person name="Houston K.A."/>
            <person name="Howland T.J."/>
            <person name="Wei M.-H."/>
            <person name="Ibegwam C."/>
            <person name="Jalali M."/>
            <person name="Kalush F."/>
            <person name="Karpen G.H."/>
            <person name="Ke Z."/>
            <person name="Kennison J.A."/>
            <person name="Ketchum K.A."/>
            <person name="Kimmel B.E."/>
            <person name="Kodira C.D."/>
            <person name="Kraft C.L."/>
            <person name="Kravitz S."/>
            <person name="Kulp D."/>
            <person name="Lai Z."/>
            <person name="Lasko P."/>
            <person name="Lei Y."/>
            <person name="Levitsky A.A."/>
            <person name="Li J.H."/>
            <person name="Li Z."/>
            <person name="Liang Y."/>
            <person name="Lin X."/>
            <person name="Liu X."/>
            <person name="Mattei B."/>
            <person name="McIntosh T.C."/>
            <person name="McLeod M.P."/>
            <person name="McPherson D."/>
            <person name="Merkulov G."/>
            <person name="Milshina N.V."/>
            <person name="Mobarry C."/>
            <person name="Morris J."/>
            <person name="Moshrefi A."/>
            <person name="Mount S.M."/>
            <person name="Moy M."/>
            <person name="Murphy B."/>
            <person name="Murphy L."/>
            <person name="Muzny D.M."/>
            <person name="Nelson D.L."/>
            <person name="Nelson D.R."/>
            <person name="Nelson K.A."/>
            <person name="Nixon K."/>
            <person name="Nusskern D.R."/>
            <person name="Pacleb J.M."/>
            <person name="Palazzolo M."/>
            <person name="Pittman G.S."/>
            <person name="Pan S."/>
            <person name="Pollard J."/>
            <person name="Puri V."/>
            <person name="Reese M.G."/>
            <person name="Reinert K."/>
            <person name="Remington K."/>
            <person name="Saunders R.D.C."/>
            <person name="Scheeler F."/>
            <person name="Shen H."/>
            <person name="Shue B.C."/>
            <person name="Siden-Kiamos I."/>
            <person name="Simpson M."/>
            <person name="Skupski M.P."/>
            <person name="Smith T.J."/>
            <person name="Spier E."/>
            <person name="Spradling A.C."/>
            <person name="Stapleton M."/>
            <person name="Strong R."/>
            <person name="Sun E."/>
            <person name="Svirskas R."/>
            <person name="Tector C."/>
            <person name="Turner R."/>
            <person name="Venter E."/>
            <person name="Wang A.H."/>
            <person name="Wang X."/>
            <person name="Wang Z.-Y."/>
            <person name="Wassarman D.A."/>
            <person name="Weinstock G.M."/>
            <person name="Weissenbach J."/>
            <person name="Williams S.M."/>
            <person name="Woodage T."/>
            <person name="Worley K.C."/>
            <person name="Wu D."/>
            <person name="Yang S."/>
            <person name="Yao Q.A."/>
            <person name="Ye J."/>
            <person name="Yeh R.-F."/>
            <person name="Zaveri J.S."/>
            <person name="Zhan M."/>
            <person name="Zhang G."/>
            <person name="Zhao Q."/>
            <person name="Zheng L."/>
            <person name="Zheng X.H."/>
            <person name="Zhong F.N."/>
            <person name="Zhong W."/>
            <person name="Zhou X."/>
            <person name="Zhu S.C."/>
            <person name="Zhu X."/>
            <person name="Smith H.O."/>
            <person name="Gibbs R.A."/>
            <person name="Myers E.W."/>
            <person name="Rubin G.M."/>
            <person name="Venter J.C."/>
        </authorList>
    </citation>
    <scope>NUCLEOTIDE SEQUENCE [LARGE SCALE GENOMIC DNA]</scope>
    <source>
        <strain>Berkeley</strain>
    </source>
</reference>
<reference key="4">
    <citation type="journal article" date="2002" name="Genome Biol.">
        <title>Annotation of the Drosophila melanogaster euchromatic genome: a systematic review.</title>
        <authorList>
            <person name="Misra S."/>
            <person name="Crosby M.A."/>
            <person name="Mungall C.J."/>
            <person name="Matthews B.B."/>
            <person name="Campbell K.S."/>
            <person name="Hradecky P."/>
            <person name="Huang Y."/>
            <person name="Kaminker J.S."/>
            <person name="Millburn G.H."/>
            <person name="Prochnik S.E."/>
            <person name="Smith C.D."/>
            <person name="Tupy J.L."/>
            <person name="Whitfield E.J."/>
            <person name="Bayraktaroglu L."/>
            <person name="Berman B.P."/>
            <person name="Bettencourt B.R."/>
            <person name="Celniker S.E."/>
            <person name="de Grey A.D.N.J."/>
            <person name="Drysdale R.A."/>
            <person name="Harris N.L."/>
            <person name="Richter J."/>
            <person name="Russo S."/>
            <person name="Schroeder A.J."/>
            <person name="Shu S.Q."/>
            <person name="Stapleton M."/>
            <person name="Yamada C."/>
            <person name="Ashburner M."/>
            <person name="Gelbart W.M."/>
            <person name="Rubin G.M."/>
            <person name="Lewis S.E."/>
        </authorList>
    </citation>
    <scope>GENOME REANNOTATION</scope>
    <source>
        <strain>Berkeley</strain>
    </source>
</reference>
<reference evidence="24" key="5">
    <citation type="submission" date="2008-11" db="EMBL/GenBank/DDBJ databases">
        <authorList>
            <person name="Carlson J."/>
            <person name="Booth B."/>
            <person name="Frise E."/>
            <person name="Park S."/>
            <person name="Wan K."/>
            <person name="Yu C."/>
            <person name="Celniker S."/>
        </authorList>
    </citation>
    <scope>NUCLEOTIDE SEQUENCE [LARGE SCALE MRNA]</scope>
    <source>
        <strain evidence="24">Berkeley</strain>
    </source>
</reference>
<reference evidence="24" key="6">
    <citation type="submission" date="2012-09" db="EMBL/GenBank/DDBJ databases">
        <title>Variability in the piRNA pathway induces a variable load of transposable elements in wild type strains of Drosophila simulans.</title>
        <authorList>
            <person name="Fablet M."/>
            <person name="Akkouche A."/>
            <person name="Braman V."/>
            <person name="Vieira C."/>
        </authorList>
    </citation>
    <scope>NUCLEOTIDE SEQUENCE [MRNA] OF 68-861 (ISOFORM D)</scope>
</reference>
<reference evidence="23" key="7">
    <citation type="journal article" date="2008" name="Genome Biol.">
        <title>Exploring systemic RNA interference in insects: a genome-wide survey for RNAi genes in Tribolium.</title>
        <authorList>
            <person name="Tomoyasu Y."/>
            <person name="Miller S.C."/>
            <person name="Tomita S."/>
            <person name="Schoppmeier M."/>
            <person name="Grossmann D."/>
            <person name="Bucher G."/>
        </authorList>
    </citation>
    <scope>NUCLEOTIDE SEQUENCE [MRNA] OF 268-762</scope>
</reference>
<reference evidence="20" key="8">
    <citation type="journal article" date="2009" name="Cell">
        <title>Collapse of germline piRNAs in the absence of Argonaute3 reveals somatic piRNAs in flies.</title>
        <authorList>
            <person name="Li C."/>
            <person name="Vagin V.V."/>
            <person name="Lee S."/>
            <person name="Xu J."/>
            <person name="Ma S."/>
            <person name="Xi H."/>
            <person name="Seitz H."/>
            <person name="Horwich M.D."/>
            <person name="Syrzycka M."/>
            <person name="Honda B.M."/>
            <person name="Kittler E.L."/>
            <person name="Zapp M.L."/>
            <person name="Klattenhoff C."/>
            <person name="Schulz N."/>
            <person name="Theurkauf W.E."/>
            <person name="Weng Z."/>
            <person name="Zamore P.D."/>
        </authorList>
    </citation>
    <scope>FUNCTION</scope>
    <scope>SUBCELLULAR LOCATION</scope>
    <scope>DISRUPTION PHENOTYPE</scope>
</reference>
<reference evidence="20" key="9">
    <citation type="journal article" date="2009" name="EMBO J.">
        <title>Functional involvement of Tudor and dPRMT5 in the piRNA processing pathway in Drosophila germlines.</title>
        <authorList>
            <person name="Nishida K.M."/>
            <person name="Okada T.N."/>
            <person name="Kawamura T."/>
            <person name="Mituyama T."/>
            <person name="Kawamura Y."/>
            <person name="Inagaki S."/>
            <person name="Huang H."/>
            <person name="Chen D."/>
            <person name="Kodama T."/>
            <person name="Siomi H."/>
            <person name="Siomi M.C."/>
        </authorList>
    </citation>
    <scope>RNA-BINDING</scope>
    <scope>INTERACTION WITH AUB AND TUD</scope>
    <scope>METHYLATION AT ARG-4; ARG-68 AND ARG-70</scope>
</reference>
<reference evidence="20" key="10">
    <citation type="journal article" date="2009" name="Nat. Cell Biol.">
        <title>Arginine methylation of Piwi proteins catalysed by dPRMT5 is required for Ago3 and Aub stability.</title>
        <authorList>
            <person name="Kirino Y."/>
            <person name="Kim N."/>
            <person name="de Planell-Saguer M."/>
            <person name="Khandros E."/>
            <person name="Chiorean S."/>
            <person name="Klein P.S."/>
            <person name="Rigoutsos I."/>
            <person name="Jongens T.A."/>
            <person name="Mourelatos Z."/>
        </authorList>
    </citation>
    <scope>SUBCELLULAR LOCATION</scope>
    <scope>TISSUE SPECIFICITY</scope>
    <scope>METHYLATION</scope>
</reference>
<reference evidence="20" key="11">
    <citation type="journal article" date="2010" name="Nature">
        <title>Maternal mRNA deadenylation and decay by the piRNA pathway in the early Drosophila embryo.</title>
        <authorList>
            <person name="Rouget C."/>
            <person name="Papin C."/>
            <person name="Boureux A."/>
            <person name="Meunier A.C."/>
            <person name="Franco B."/>
            <person name="Robine N."/>
            <person name="Lai E.C."/>
            <person name="Pelisson A."/>
            <person name="Simonelig M."/>
        </authorList>
    </citation>
    <scope>FUNCTION</scope>
    <scope>INTERACTION WITH SMG; TWIN AND AUB</scope>
    <scope>SUBCELLULAR LOCATION</scope>
</reference>
<reference evidence="20" key="12">
    <citation type="journal article" date="2010" name="RNA">
        <title>Biogenesis pathways of piRNAs loaded onto AGO3 in the Drosophila testis.</title>
        <authorList>
            <person name="Nagao A."/>
            <person name="Mituyama T."/>
            <person name="Huang H."/>
            <person name="Chen D."/>
            <person name="Siomi M.C."/>
            <person name="Siomi H."/>
        </authorList>
    </citation>
    <scope>FUNCTION</scope>
    <scope>RNA-BINDING</scope>
    <scope>SUBCELLULAR LOCATION</scope>
    <scope>TISSUE SPECIFICITY</scope>
    <scope>DISRUPTION PHENOTYPE</scope>
</reference>
<reference evidence="20" key="13">
    <citation type="journal article" date="2011" name="Development">
        <title>PAPI, a novel TUDOR-domain protein, complexes with AGO3, ME31B and TRAL in the nuage to silence transposition.</title>
        <authorList>
            <person name="Liu L."/>
            <person name="Qi H."/>
            <person name="Wang J."/>
            <person name="Lin H."/>
        </authorList>
    </citation>
    <scope>INTERACTION WITH PAPI</scope>
    <scope>SUBCELLULAR LOCATION</scope>
    <scope>MUTAGENESIS OF 68-ARG--ARG-72</scope>
</reference>
<reference key="14">
    <citation type="journal article" date="2011" name="Front. Genet.">
        <title>Gender-Specific Hierarchy in Nuage Localization of PIWI-Interacting RNA Factors in Drosophila.</title>
        <authorList>
            <person name="Nagao A."/>
            <person name="Sato K."/>
            <person name="Nishida K.M."/>
            <person name="Siomi H."/>
            <person name="Siomi M.C."/>
        </authorList>
    </citation>
    <scope>FUNCTION</scope>
    <scope>SUBCELLULAR LOCATION</scope>
    <scope>DEVELOPMENTAL STAGE</scope>
</reference>
<reference evidence="20" key="15">
    <citation type="journal article" date="2013" name="Science">
        <title>Transposition-driven genomic heterogeneity in the Drosophila brain.</title>
        <authorList>
            <person name="Perrat P.N."/>
            <person name="DasGupta S."/>
            <person name="Wang J."/>
            <person name="Theurkauf W."/>
            <person name="Weng Z."/>
            <person name="Rosbash M."/>
            <person name="Waddell S."/>
        </authorList>
    </citation>
    <scope>FUNCTION</scope>
    <scope>TISSUE SPECIFICITY</scope>
</reference>
<reference key="16">
    <citation type="journal article" date="2015" name="Mol. Cell">
        <title>Krimper Enforces an Antisense Bias on piRNA Pools by Binding AGO3 in the Drosophila Germline.</title>
        <authorList>
            <person name="Sato K."/>
            <person name="Iwasaki Y.W."/>
            <person name="Shibuya A."/>
            <person name="Carninci P."/>
            <person name="Tsuchizawa Y."/>
            <person name="Ishizu H."/>
            <person name="Siomi M.C."/>
            <person name="Siomi H."/>
        </authorList>
    </citation>
    <scope>FUNCTION</scope>
    <scope>INTERACTION WITH KRIMP AND TUD</scope>
    <scope>METHYLATION AT ARG-4; ARG-68 AND ARG-70</scope>
</reference>
<reference key="17">
    <citation type="journal article" date="2015" name="Mol. Cell">
        <title>Aub and Ago3 Are Recruited to Nuage through Two Mechanisms to Form a Ping-Pong Complex Assembled by Krimper.</title>
        <authorList>
            <person name="Webster A."/>
            <person name="Li S."/>
            <person name="Hur J.K."/>
            <person name="Wachsmuth M."/>
            <person name="Bois J.S."/>
            <person name="Perkins E.M."/>
            <person name="Patel D.J."/>
            <person name="Aravin A.A."/>
        </authorList>
    </citation>
    <scope>FUNCTION</scope>
    <scope>IDENTIFICATION IN THE PING-PONG PIRNA PROCESSING (4P) COMPLEX</scope>
    <scope>INTERACTION WITH KRIMP</scope>
    <scope>SUBCELLULAR LOCATION</scope>
    <scope>MUTAGENESIS OF 579-TYR--LYS-583 AND 68-ARG--ARG-72</scope>
</reference>
<reference evidence="28" key="18">
    <citation type="journal article" date="2021" name="Nat. Commun.">
        <title>Binding of guide piRNA triggers methylation of the unstructured N-terminal region of Aub leading to assembly of the piRNA amplification complex.</title>
        <authorList>
            <person name="Huang X."/>
            <person name="Hu H."/>
            <person name="Webster A."/>
            <person name="Zou F."/>
            <person name="Du J."/>
            <person name="Patel D.J."/>
            <person name="Sachidanandam R."/>
            <person name="Toth K.F."/>
            <person name="Aravin A.A."/>
            <person name="Li S."/>
        </authorList>
    </citation>
    <scope>X-RAY CRYSTALLOGRAPHY (2.40 ANGSTROMS) OF 63-78</scope>
    <scope>FUNCTION</scope>
    <scope>INTERACTION WITH KRIMP AND AUB</scope>
    <scope>METHYLATION</scope>
</reference>
<feature type="chain" id="PRO_0000422914" description="Protein argonaute-3">
    <location>
        <begin position="1"/>
        <end position="867"/>
    </location>
</feature>
<feature type="domain" description="PAZ" evidence="1">
    <location>
        <begin position="291"/>
        <end position="402"/>
    </location>
</feature>
<feature type="domain" description="Piwi" evidence="2">
    <location>
        <begin position="566"/>
        <end position="853"/>
    </location>
</feature>
<feature type="region of interest" description="Interaction with papi" evidence="11">
    <location>
        <begin position="1"/>
        <end position="289"/>
    </location>
</feature>
<feature type="region of interest" description="Necessary and sufficient for interaction with krimp" evidence="14">
    <location>
        <begin position="1"/>
        <end position="83"/>
    </location>
</feature>
<feature type="modified residue" description="Symmetric dimethylarginine" evidence="8 14">
    <location>
        <position position="4"/>
    </location>
</feature>
<feature type="modified residue" description="Symmetric dimethylarginine" evidence="8 14">
    <location>
        <position position="68"/>
    </location>
</feature>
<feature type="modified residue" description="Symmetric dimethylarginine" evidence="8 14">
    <location>
        <position position="70"/>
    </location>
</feature>
<feature type="splice variant" id="VSP_047355" description="In isoform G." evidence="18 19">
    <original>YAHKLAYLIGQSIQRDVAEALSEKLFYL</original>
    <variation>VSHNYHLIFFKSTMITQDTINDFTRAL</variation>
    <location>
        <begin position="840"/>
        <end position="867"/>
    </location>
</feature>
<feature type="mutagenesis site" description="Abolishes binding to papi. Does not affect binding to krimp." evidence="11 15">
    <original>RGRAR</original>
    <variation>KGKAK</variation>
    <location>
        <begin position="68"/>
        <end position="72"/>
    </location>
</feature>
<feature type="mutagenesis site" description="Abrogates piRNA binding. Does not affect binding to krimp. Reduces mobility within the nuage, probably due to association with krimp." evidence="15">
    <original>YAAIK</original>
    <variation>LAAIE</variation>
    <location>
        <begin position="579"/>
        <end position="583"/>
    </location>
</feature>
<feature type="sequence conflict" description="In Ref. 1; ABO27430." evidence="20" ref="1">
    <original>G</original>
    <variation>R</variation>
    <location>
        <position position="42"/>
    </location>
</feature>
<feature type="sequence conflict" description="In Ref. 6; AFX62827." evidence="20" ref="6">
    <original>D</original>
    <variation>G</variation>
    <location>
        <position position="168"/>
    </location>
</feature>
<feature type="sequence conflict" description="In Ref. 6; AFX62828." evidence="20" ref="6">
    <original>V</original>
    <variation>L</variation>
    <location>
        <position position="320"/>
    </location>
</feature>
<feature type="sequence conflict" description="In Ref. 6; AFX62828." evidence="20" ref="6">
    <original>P</original>
    <variation>L</variation>
    <location>
        <position position="371"/>
    </location>
</feature>
<feature type="sequence conflict" description="In Ref. 6; AFX62828." evidence="20" ref="6">
    <original>S</original>
    <variation>L</variation>
    <location>
        <position position="543"/>
    </location>
</feature>
<feature type="sequence conflict" description="In Ref. 6; AFX62828." evidence="20" ref="6">
    <original>K</original>
    <variation>R</variation>
    <location>
        <position position="600"/>
    </location>
</feature>
<feature type="sequence conflict" description="In Ref. 6; AFX62827." evidence="20" ref="6">
    <original>E</original>
    <variation>A</variation>
    <location>
        <position position="732"/>
    </location>
</feature>
<feature type="helix" evidence="29">
    <location>
        <begin position="71"/>
        <end position="77"/>
    </location>
</feature>
<organism evidence="27">
    <name type="scientific">Drosophila melanogaster</name>
    <name type="common">Fruit fly</name>
    <dbReference type="NCBI Taxonomy" id="7227"/>
    <lineage>
        <taxon>Eukaryota</taxon>
        <taxon>Metazoa</taxon>
        <taxon>Ecdysozoa</taxon>
        <taxon>Arthropoda</taxon>
        <taxon>Hexapoda</taxon>
        <taxon>Insecta</taxon>
        <taxon>Pterygota</taxon>
        <taxon>Neoptera</taxon>
        <taxon>Endopterygota</taxon>
        <taxon>Diptera</taxon>
        <taxon>Brachycera</taxon>
        <taxon>Muscomorpha</taxon>
        <taxon>Ephydroidea</taxon>
        <taxon>Drosophilidae</taxon>
        <taxon>Drosophila</taxon>
        <taxon>Sophophora</taxon>
    </lineage>
</organism>